<organism>
    <name type="scientific">Shigella dysenteriae serotype 1 (strain Sd197)</name>
    <dbReference type="NCBI Taxonomy" id="300267"/>
    <lineage>
        <taxon>Bacteria</taxon>
        <taxon>Pseudomonadati</taxon>
        <taxon>Pseudomonadota</taxon>
        <taxon>Gammaproteobacteria</taxon>
        <taxon>Enterobacterales</taxon>
        <taxon>Enterobacteriaceae</taxon>
        <taxon>Shigella</taxon>
    </lineage>
</organism>
<feature type="signal peptide" evidence="1">
    <location>
        <begin position="1"/>
        <end position="21"/>
    </location>
</feature>
<feature type="chain" id="PRO_0000045955" description="Protein YebF">
    <location>
        <begin position="22"/>
        <end position="118"/>
    </location>
</feature>
<feature type="domain" description="YebF/Cmi" evidence="2">
    <location>
        <begin position="31"/>
        <end position="118"/>
    </location>
</feature>
<feature type="disulfide bond" evidence="2">
    <location>
        <begin position="35"/>
        <end position="108"/>
    </location>
</feature>
<name>YEBF_SHIDS</name>
<keyword id="KW-1015">Disulfide bond</keyword>
<keyword id="KW-1185">Reference proteome</keyword>
<keyword id="KW-0964">Secreted</keyword>
<keyword id="KW-0732">Signal</keyword>
<protein>
    <recommendedName>
        <fullName evidence="1">Protein YebF</fullName>
    </recommendedName>
</protein>
<reference key="1">
    <citation type="journal article" date="2005" name="Nucleic Acids Res.">
        <title>Genome dynamics and diversity of Shigella species, the etiologic agents of bacillary dysentery.</title>
        <authorList>
            <person name="Yang F."/>
            <person name="Yang J."/>
            <person name="Zhang X."/>
            <person name="Chen L."/>
            <person name="Jiang Y."/>
            <person name="Yan Y."/>
            <person name="Tang X."/>
            <person name="Wang J."/>
            <person name="Xiong Z."/>
            <person name="Dong J."/>
            <person name="Xue Y."/>
            <person name="Zhu Y."/>
            <person name="Xu X."/>
            <person name="Sun L."/>
            <person name="Chen S."/>
            <person name="Nie H."/>
            <person name="Peng J."/>
            <person name="Xu J."/>
            <person name="Wang Y."/>
            <person name="Yuan Z."/>
            <person name="Wen Y."/>
            <person name="Yao Z."/>
            <person name="Shen Y."/>
            <person name="Qiang B."/>
            <person name="Hou Y."/>
            <person name="Yu J."/>
            <person name="Jin Q."/>
        </authorList>
    </citation>
    <scope>NUCLEOTIDE SEQUENCE [LARGE SCALE GENOMIC DNA]</scope>
    <source>
        <strain>Sd197</strain>
    </source>
</reference>
<sequence>MKKRGAFLGLLLVSACASVFAANNETSKSVTFPKCEGLDAAGIAASVKRDYQQNRVARWADDQKIVGQADLVAWVSLQDIQGKDDKWSVLLTVSGKSADIHYQVSVDCKAGMAEYQRR</sequence>
<proteinExistence type="inferred from homology"/>
<accession>Q32HB5</accession>
<evidence type="ECO:0000255" key="1">
    <source>
        <dbReference type="HAMAP-Rule" id="MF_01435"/>
    </source>
</evidence>
<evidence type="ECO:0000255" key="2">
    <source>
        <dbReference type="PROSITE-ProRule" id="PRU01323"/>
    </source>
</evidence>
<evidence type="ECO:0000305" key="3"/>
<comment type="subcellular location">
    <subcellularLocation>
        <location evidence="1">Secreted</location>
    </subcellularLocation>
</comment>
<comment type="similarity">
    <text evidence="1">Belongs to the YebF family.</text>
</comment>
<comment type="sequence caution" evidence="3">
    <conflict type="erroneous initiation">
        <sequence resource="EMBL-CDS" id="ABB61290"/>
    </conflict>
</comment>
<dbReference type="EMBL" id="CP000034">
    <property type="protein sequence ID" value="ABB61290.1"/>
    <property type="status" value="ALT_INIT"/>
    <property type="molecule type" value="Genomic_DNA"/>
</dbReference>
<dbReference type="RefSeq" id="WP_005023611.1">
    <property type="nucleotide sequence ID" value="NC_007606.1"/>
</dbReference>
<dbReference type="RefSeq" id="YP_402781.1">
    <property type="nucleotide sequence ID" value="NC_007606.1"/>
</dbReference>
<dbReference type="SMR" id="Q32HB5"/>
<dbReference type="STRING" id="300267.SDY_1133"/>
<dbReference type="EnsemblBacteria" id="ABB61290">
    <property type="protein sequence ID" value="ABB61290"/>
    <property type="gene ID" value="SDY_1133"/>
</dbReference>
<dbReference type="KEGG" id="sdy:SDY_1133"/>
<dbReference type="PATRIC" id="fig|300267.13.peg.1335"/>
<dbReference type="HOGENOM" id="CLU_161319_1_0_6"/>
<dbReference type="Proteomes" id="UP000002716">
    <property type="component" value="Chromosome"/>
</dbReference>
<dbReference type="GO" id="GO:0005576">
    <property type="term" value="C:extracellular region"/>
    <property type="evidence" value="ECO:0007669"/>
    <property type="project" value="UniProtKB-SubCell"/>
</dbReference>
<dbReference type="Gene3D" id="3.10.450.300">
    <property type="entry name" value="YebF/Colicin-M immunity protein"/>
    <property type="match status" value="1"/>
</dbReference>
<dbReference type="HAMAP" id="MF_01435">
    <property type="entry name" value="YebF"/>
    <property type="match status" value="1"/>
</dbReference>
<dbReference type="InterPro" id="IPR020236">
    <property type="entry name" value="Uncharacterised_YebF"/>
</dbReference>
<dbReference type="InterPro" id="IPR038703">
    <property type="entry name" value="YebF/Cmi_sf"/>
</dbReference>
<dbReference type="InterPro" id="IPR025603">
    <property type="entry name" value="YebF/ColM_immunity"/>
</dbReference>
<dbReference type="NCBIfam" id="NF010224">
    <property type="entry name" value="PRK13680.1"/>
    <property type="match status" value="1"/>
</dbReference>
<dbReference type="NCBIfam" id="NF041240">
    <property type="entry name" value="YebF_not_Cmi"/>
    <property type="match status" value="1"/>
</dbReference>
<dbReference type="Pfam" id="PF13995">
    <property type="entry name" value="YebF"/>
    <property type="match status" value="1"/>
</dbReference>
<dbReference type="PROSITE" id="PS51979">
    <property type="entry name" value="YEBF_CMI"/>
    <property type="match status" value="1"/>
</dbReference>
<gene>
    <name evidence="1" type="primary">yebF</name>
    <name type="ordered locus">SDY_1133</name>
</gene>